<gene>
    <name evidence="1" type="primary">rplQ</name>
    <name type="ordered locus">UTI89_C3739</name>
</gene>
<proteinExistence type="inferred from homology"/>
<organism>
    <name type="scientific">Escherichia coli (strain UTI89 / UPEC)</name>
    <dbReference type="NCBI Taxonomy" id="364106"/>
    <lineage>
        <taxon>Bacteria</taxon>
        <taxon>Pseudomonadati</taxon>
        <taxon>Pseudomonadota</taxon>
        <taxon>Gammaproteobacteria</taxon>
        <taxon>Enterobacterales</taxon>
        <taxon>Enterobacteriaceae</taxon>
        <taxon>Escherichia</taxon>
    </lineage>
</organism>
<protein>
    <recommendedName>
        <fullName evidence="1">Large ribosomal subunit protein bL17</fullName>
    </recommendedName>
    <alternativeName>
        <fullName evidence="2">50S ribosomal protein L17</fullName>
    </alternativeName>
</protein>
<evidence type="ECO:0000255" key="1">
    <source>
        <dbReference type="HAMAP-Rule" id="MF_01368"/>
    </source>
</evidence>
<evidence type="ECO:0000305" key="2"/>
<reference key="1">
    <citation type="journal article" date="2006" name="Proc. Natl. Acad. Sci. U.S.A.">
        <title>Identification of genes subject to positive selection in uropathogenic strains of Escherichia coli: a comparative genomics approach.</title>
        <authorList>
            <person name="Chen S.L."/>
            <person name="Hung C.-S."/>
            <person name="Xu J."/>
            <person name="Reigstad C.S."/>
            <person name="Magrini V."/>
            <person name="Sabo A."/>
            <person name="Blasiar D."/>
            <person name="Bieri T."/>
            <person name="Meyer R.R."/>
            <person name="Ozersky P."/>
            <person name="Armstrong J.R."/>
            <person name="Fulton R.S."/>
            <person name="Latreille J.P."/>
            <person name="Spieth J."/>
            <person name="Hooton T.M."/>
            <person name="Mardis E.R."/>
            <person name="Hultgren S.J."/>
            <person name="Gordon J.I."/>
        </authorList>
    </citation>
    <scope>NUCLEOTIDE SEQUENCE [LARGE SCALE GENOMIC DNA]</scope>
    <source>
        <strain>UTI89 / UPEC</strain>
    </source>
</reference>
<sequence>MRHRKSGRQLNRNSSHRQAMFRNMAGSLVRHEIIKTTLPKAKELRRVVEPLITLAKTDSVANRRLAFARTRDNEIVAKLFNELGPRFASRAGGYTRILKCGFRAGDNAPMAYIELVDRSEKAEAAAE</sequence>
<keyword id="KW-0687">Ribonucleoprotein</keyword>
<keyword id="KW-0689">Ribosomal protein</keyword>
<name>RL17_ECOUT</name>
<feature type="chain" id="PRO_0000267870" description="Large ribosomal subunit protein bL17">
    <location>
        <begin position="1"/>
        <end position="127"/>
    </location>
</feature>
<dbReference type="EMBL" id="CP000243">
    <property type="protein sequence ID" value="ABE09176.1"/>
    <property type="molecule type" value="Genomic_DNA"/>
</dbReference>
<dbReference type="RefSeq" id="WP_001216368.1">
    <property type="nucleotide sequence ID" value="NZ_CP064825.1"/>
</dbReference>
<dbReference type="SMR" id="Q1R638"/>
<dbReference type="GeneID" id="97442834"/>
<dbReference type="KEGG" id="eci:UTI89_C3739"/>
<dbReference type="HOGENOM" id="CLU_074407_2_0_6"/>
<dbReference type="Proteomes" id="UP000001952">
    <property type="component" value="Chromosome"/>
</dbReference>
<dbReference type="GO" id="GO:0022625">
    <property type="term" value="C:cytosolic large ribosomal subunit"/>
    <property type="evidence" value="ECO:0007669"/>
    <property type="project" value="TreeGrafter"/>
</dbReference>
<dbReference type="GO" id="GO:0003735">
    <property type="term" value="F:structural constituent of ribosome"/>
    <property type="evidence" value="ECO:0007669"/>
    <property type="project" value="InterPro"/>
</dbReference>
<dbReference type="GO" id="GO:0006412">
    <property type="term" value="P:translation"/>
    <property type="evidence" value="ECO:0007669"/>
    <property type="project" value="UniProtKB-UniRule"/>
</dbReference>
<dbReference type="FunFam" id="3.90.1030.10:FF:000001">
    <property type="entry name" value="50S ribosomal protein L17"/>
    <property type="match status" value="1"/>
</dbReference>
<dbReference type="Gene3D" id="3.90.1030.10">
    <property type="entry name" value="Ribosomal protein L17"/>
    <property type="match status" value="1"/>
</dbReference>
<dbReference type="HAMAP" id="MF_01368">
    <property type="entry name" value="Ribosomal_bL17"/>
    <property type="match status" value="1"/>
</dbReference>
<dbReference type="InterPro" id="IPR000456">
    <property type="entry name" value="Ribosomal_bL17"/>
</dbReference>
<dbReference type="InterPro" id="IPR047859">
    <property type="entry name" value="Ribosomal_bL17_CS"/>
</dbReference>
<dbReference type="InterPro" id="IPR036373">
    <property type="entry name" value="Ribosomal_bL17_sf"/>
</dbReference>
<dbReference type="NCBIfam" id="TIGR00059">
    <property type="entry name" value="L17"/>
    <property type="match status" value="1"/>
</dbReference>
<dbReference type="PANTHER" id="PTHR14413:SF16">
    <property type="entry name" value="LARGE RIBOSOMAL SUBUNIT PROTEIN BL17M"/>
    <property type="match status" value="1"/>
</dbReference>
<dbReference type="PANTHER" id="PTHR14413">
    <property type="entry name" value="RIBOSOMAL PROTEIN L17"/>
    <property type="match status" value="1"/>
</dbReference>
<dbReference type="Pfam" id="PF01196">
    <property type="entry name" value="Ribosomal_L17"/>
    <property type="match status" value="1"/>
</dbReference>
<dbReference type="SUPFAM" id="SSF64263">
    <property type="entry name" value="Prokaryotic ribosomal protein L17"/>
    <property type="match status" value="1"/>
</dbReference>
<dbReference type="PROSITE" id="PS01167">
    <property type="entry name" value="RIBOSOMAL_L17"/>
    <property type="match status" value="1"/>
</dbReference>
<accession>Q1R638</accession>
<comment type="subunit">
    <text evidence="1">Part of the 50S ribosomal subunit. Contacts protein L32.</text>
</comment>
<comment type="similarity">
    <text evidence="1">Belongs to the bacterial ribosomal protein bL17 family.</text>
</comment>